<dbReference type="EMBL" id="AY566569">
    <property type="protein sequence ID" value="AAS68633.1"/>
    <property type="molecule type" value="mRNA"/>
</dbReference>
<dbReference type="RefSeq" id="NP_001265779.1">
    <property type="nucleotide sequence ID" value="NM_001278850.1"/>
</dbReference>
<dbReference type="SMR" id="Q594P2"/>
<dbReference type="FunCoup" id="Q594P2">
    <property type="interactions" value="1"/>
</dbReference>
<dbReference type="STRING" id="9685.ENSFCAP00000032175"/>
<dbReference type="GlyCosmos" id="Q594P2">
    <property type="glycosylation" value="1 site, No reported glycans"/>
</dbReference>
<dbReference type="PaxDb" id="9685-ENSFCAP00000012398"/>
<dbReference type="GeneID" id="101087632"/>
<dbReference type="KEGG" id="fca:101087632"/>
<dbReference type="CTD" id="4653"/>
<dbReference type="eggNOG" id="KOG3545">
    <property type="taxonomic scope" value="Eukaryota"/>
</dbReference>
<dbReference type="InParanoid" id="Q594P2"/>
<dbReference type="OrthoDB" id="8626508at2759"/>
<dbReference type="TreeFam" id="TF315964"/>
<dbReference type="Proteomes" id="UP000011712">
    <property type="component" value="Unplaced"/>
</dbReference>
<dbReference type="GO" id="GO:0005929">
    <property type="term" value="C:cilium"/>
    <property type="evidence" value="ECO:0007669"/>
    <property type="project" value="UniProtKB-SubCell"/>
</dbReference>
<dbReference type="GO" id="GO:0062023">
    <property type="term" value="C:collagen-containing extracellular matrix"/>
    <property type="evidence" value="ECO:0000250"/>
    <property type="project" value="UniProtKB"/>
</dbReference>
<dbReference type="GO" id="GO:0031410">
    <property type="term" value="C:cytoplasmic vesicle"/>
    <property type="evidence" value="ECO:0000250"/>
    <property type="project" value="UniProtKB"/>
</dbReference>
<dbReference type="GO" id="GO:0005783">
    <property type="term" value="C:endoplasmic reticulum"/>
    <property type="evidence" value="ECO:0000250"/>
    <property type="project" value="UniProtKB"/>
</dbReference>
<dbReference type="GO" id="GO:0070062">
    <property type="term" value="C:extracellular exosome"/>
    <property type="evidence" value="ECO:0000250"/>
    <property type="project" value="UniProtKB"/>
</dbReference>
<dbReference type="GO" id="GO:0005615">
    <property type="term" value="C:extracellular space"/>
    <property type="evidence" value="ECO:0000318"/>
    <property type="project" value="GO_Central"/>
</dbReference>
<dbReference type="GO" id="GO:0005794">
    <property type="term" value="C:Golgi apparatus"/>
    <property type="evidence" value="ECO:0000250"/>
    <property type="project" value="UniProtKB"/>
</dbReference>
<dbReference type="GO" id="GO:0005743">
    <property type="term" value="C:mitochondrial inner membrane"/>
    <property type="evidence" value="ECO:0000250"/>
    <property type="project" value="UniProtKB"/>
</dbReference>
<dbReference type="GO" id="GO:0005758">
    <property type="term" value="C:mitochondrial intermembrane space"/>
    <property type="evidence" value="ECO:0000250"/>
    <property type="project" value="UniProtKB"/>
</dbReference>
<dbReference type="GO" id="GO:0005741">
    <property type="term" value="C:mitochondrial outer membrane"/>
    <property type="evidence" value="ECO:0000250"/>
    <property type="project" value="UniProtKB"/>
</dbReference>
<dbReference type="GO" id="GO:0033268">
    <property type="term" value="C:node of Ranvier"/>
    <property type="evidence" value="ECO:0000250"/>
    <property type="project" value="UniProtKB"/>
</dbReference>
<dbReference type="GO" id="GO:0005791">
    <property type="term" value="C:rough endoplasmic reticulum"/>
    <property type="evidence" value="ECO:0007669"/>
    <property type="project" value="UniProtKB-SubCell"/>
</dbReference>
<dbReference type="GO" id="GO:0046872">
    <property type="term" value="F:metal ion binding"/>
    <property type="evidence" value="ECO:0007669"/>
    <property type="project" value="UniProtKB-KW"/>
</dbReference>
<dbReference type="GO" id="GO:0060348">
    <property type="term" value="P:bone development"/>
    <property type="evidence" value="ECO:0000250"/>
    <property type="project" value="UniProtKB"/>
</dbReference>
<dbReference type="GO" id="GO:0045162">
    <property type="term" value="P:clustering of voltage-gated sodium channels"/>
    <property type="evidence" value="ECO:0000250"/>
    <property type="project" value="UniProtKB"/>
</dbReference>
<dbReference type="GO" id="GO:0038133">
    <property type="term" value="P:ERBB2-ERBB3 signaling pathway"/>
    <property type="evidence" value="ECO:0000250"/>
    <property type="project" value="UniProtKB"/>
</dbReference>
<dbReference type="GO" id="GO:0022011">
    <property type="term" value="P:myelination in peripheral nervous system"/>
    <property type="evidence" value="ECO:0000250"/>
    <property type="project" value="UniProtKB"/>
</dbReference>
<dbReference type="GO" id="GO:0001953">
    <property type="term" value="P:negative regulation of cell-matrix adhesion"/>
    <property type="evidence" value="ECO:0000250"/>
    <property type="project" value="UniProtKB"/>
</dbReference>
<dbReference type="GO" id="GO:0035024">
    <property type="term" value="P:negative regulation of Rho protein signal transduction"/>
    <property type="evidence" value="ECO:0000250"/>
    <property type="project" value="UniProtKB"/>
</dbReference>
<dbReference type="GO" id="GO:0051497">
    <property type="term" value="P:negative regulation of stress fiber assembly"/>
    <property type="evidence" value="ECO:0000250"/>
    <property type="project" value="UniProtKB"/>
</dbReference>
<dbReference type="GO" id="GO:0031175">
    <property type="term" value="P:neuron projection development"/>
    <property type="evidence" value="ECO:0000250"/>
    <property type="project" value="UniProtKB"/>
</dbReference>
<dbReference type="GO" id="GO:0035567">
    <property type="term" value="P:non-canonical Wnt signaling pathway"/>
    <property type="evidence" value="ECO:0000250"/>
    <property type="project" value="UniProtKB"/>
</dbReference>
<dbReference type="GO" id="GO:0001649">
    <property type="term" value="P:osteoblast differentiation"/>
    <property type="evidence" value="ECO:0000250"/>
    <property type="project" value="UniProtKB"/>
</dbReference>
<dbReference type="GO" id="GO:0030335">
    <property type="term" value="P:positive regulation of cell migration"/>
    <property type="evidence" value="ECO:0000250"/>
    <property type="project" value="UniProtKB"/>
</dbReference>
<dbReference type="GO" id="GO:0051894">
    <property type="term" value="P:positive regulation of focal adhesion assembly"/>
    <property type="evidence" value="ECO:0000250"/>
    <property type="project" value="UniProtKB"/>
</dbReference>
<dbReference type="GO" id="GO:0051901">
    <property type="term" value="P:positive regulation of mitochondrial depolarization"/>
    <property type="evidence" value="ECO:0000250"/>
    <property type="project" value="UniProtKB"/>
</dbReference>
<dbReference type="GO" id="GO:0051897">
    <property type="term" value="P:positive regulation of phosphatidylinositol 3-kinase/protein kinase B signal transduction"/>
    <property type="evidence" value="ECO:0000250"/>
    <property type="project" value="UniProtKB"/>
</dbReference>
<dbReference type="GO" id="GO:0051496">
    <property type="term" value="P:positive regulation of stress fiber assembly"/>
    <property type="evidence" value="ECO:0000250"/>
    <property type="project" value="UniProtKB"/>
</dbReference>
<dbReference type="GO" id="GO:1900026">
    <property type="term" value="P:positive regulation of substrate adhesion-dependent cell spreading"/>
    <property type="evidence" value="ECO:0000250"/>
    <property type="project" value="UniProtKB"/>
</dbReference>
<dbReference type="GO" id="GO:0043408">
    <property type="term" value="P:regulation of MAPK cascade"/>
    <property type="evidence" value="ECO:0000250"/>
    <property type="project" value="UniProtKB"/>
</dbReference>
<dbReference type="GO" id="GO:0007165">
    <property type="term" value="P:signal transduction"/>
    <property type="evidence" value="ECO:0000318"/>
    <property type="project" value="GO_Central"/>
</dbReference>
<dbReference type="GO" id="GO:0014734">
    <property type="term" value="P:skeletal muscle hypertrophy"/>
    <property type="evidence" value="ECO:0000250"/>
    <property type="project" value="UniProtKB"/>
</dbReference>
<dbReference type="InterPro" id="IPR003112">
    <property type="entry name" value="Olfac-like_dom"/>
</dbReference>
<dbReference type="InterPro" id="IPR050605">
    <property type="entry name" value="Olfactomedin-like_domain"/>
</dbReference>
<dbReference type="PANTHER" id="PTHR23192:SF33">
    <property type="entry name" value="MYOCILIN"/>
    <property type="match status" value="1"/>
</dbReference>
<dbReference type="PANTHER" id="PTHR23192">
    <property type="entry name" value="OLFACTOMEDIN-RELATED"/>
    <property type="match status" value="1"/>
</dbReference>
<dbReference type="Pfam" id="PF02191">
    <property type="entry name" value="OLF"/>
    <property type="match status" value="1"/>
</dbReference>
<dbReference type="SMART" id="SM00284">
    <property type="entry name" value="OLF"/>
    <property type="match status" value="1"/>
</dbReference>
<dbReference type="PROSITE" id="PS51132">
    <property type="entry name" value="OLF"/>
    <property type="match status" value="1"/>
</dbReference>
<reference key="1">
    <citation type="submission" date="2004-03" db="EMBL/GenBank/DDBJ databases">
        <title>Characterization of the domestic cat myocilin cDNA.</title>
        <authorList>
            <person name="Fautsch M.P."/>
            <person name="Vrabel A.M."/>
            <person name="Johnson D.H."/>
        </authorList>
    </citation>
    <scope>NUCLEOTIDE SEQUENCE [MRNA]</scope>
</reference>
<accession>Q594P2</accession>
<feature type="signal peptide" evidence="5">
    <location>
        <begin position="1"/>
        <end position="18"/>
    </location>
</feature>
<feature type="chain" id="PRO_0000041830" description="Myocilin">
    <location>
        <begin position="19"/>
        <end position="490"/>
    </location>
</feature>
<feature type="chain" id="PRO_0000428739" description="Myocilin, N-terminal fragment" evidence="1">
    <location>
        <begin position="19"/>
        <end position="212"/>
    </location>
</feature>
<feature type="chain" id="PRO_0000428740" description="Myocilin, C-terminal fragment" evidence="1">
    <location>
        <begin position="213"/>
        <end position="490"/>
    </location>
</feature>
<feature type="domain" description="Olfactomedin-like" evidence="6">
    <location>
        <begin position="230"/>
        <end position="489"/>
    </location>
</feature>
<feature type="region of interest" description="Disordered" evidence="7">
    <location>
        <begin position="146"/>
        <end position="188"/>
    </location>
</feature>
<feature type="coiled-coil region" evidence="5">
    <location>
        <begin position="52"/>
        <end position="169"/>
    </location>
</feature>
<feature type="short sequence motif" description="Microbody targeting signal" evidence="5">
    <location>
        <begin position="488"/>
        <end position="490"/>
    </location>
</feature>
<feature type="compositionally biased region" description="Basic and acidic residues" evidence="7">
    <location>
        <begin position="146"/>
        <end position="157"/>
    </location>
</feature>
<feature type="binding site" evidence="4">
    <location>
        <position position="366"/>
    </location>
    <ligand>
        <name>Ca(2+)</name>
        <dbReference type="ChEBI" id="CHEBI:29108"/>
    </ligand>
</feature>
<feature type="binding site" evidence="4">
    <location>
        <position position="414"/>
    </location>
    <ligand>
        <name>Ca(2+)</name>
        <dbReference type="ChEBI" id="CHEBI:29108"/>
    </ligand>
</feature>
<feature type="binding site" evidence="4">
    <location>
        <position position="415"/>
    </location>
    <ligand>
        <name>Ca(2+)</name>
        <dbReference type="ChEBI" id="CHEBI:29108"/>
    </ligand>
</feature>
<feature type="binding site" evidence="4">
    <location>
        <position position="463"/>
    </location>
    <ligand>
        <name>Ca(2+)</name>
        <dbReference type="ChEBI" id="CHEBI:29108"/>
    </ligand>
</feature>
<feature type="binding site" evidence="4">
    <location>
        <position position="464"/>
    </location>
    <ligand>
        <name>Ca(2+)</name>
        <dbReference type="ChEBI" id="CHEBI:29108"/>
    </ligand>
</feature>
<feature type="site" description="Cleavage; by CAPN2" evidence="1">
    <location>
        <begin position="212"/>
        <end position="213"/>
    </location>
</feature>
<feature type="glycosylation site" description="N-linked (GlcNAc...) asparagine" evidence="5">
    <location>
        <position position="43"/>
    </location>
</feature>
<feature type="disulfide bond" evidence="4 6">
    <location>
        <begin position="231"/>
        <end position="419"/>
    </location>
</feature>
<sequence length="490" mass="55306">MPATQLLLLACLVWGLGARTAQLRKANDRSGRCQYTFSVASPNESSCPEQGQAMSAIQDLQRDSSAQRADLESTKARLRSLESLVHQLTLDEAAGPSATQEGLQRELGALRREREQLESQNRELEASYSNLLRDKSALEEEKRRLREENEDLARRLDSSSQEVARLRRGQCPQARGTPQDVPSGSREVSKWNVETVNFQELKSELTEVPASRILKESPSGHPRSEEGDPGCGELVWVGEPLTLRRAETITGKYGVWMRDPKPAYPYTQETTWRIDTVGTDIRQVFEYDLSSQFLQGYPSKVHVLPRPLESTGAVVYWGSLYFQGAESRTVIRYELNTETVKAEKEIPGAGYHGQFPYSWGGYTDIDLAVDETGLWVIYSTQEAKGAIVLSKLNPESLELERTWETNIRKQSVANAFIICGRLYTVSSYSAPDATINFAYDTGTGRSRALTVPFKNRYKYSSMVDYNPLEKKLFAWDNFNMVTYDLRLSEM</sequence>
<protein>
    <recommendedName>
        <fullName>Myocilin</fullName>
    </recommendedName>
    <component>
        <recommendedName>
            <fullName>Myocilin, N-terminal fragment</fullName>
        </recommendedName>
        <alternativeName>
            <fullName>Myocilin 20 kDa N-terminal fragment</fullName>
        </alternativeName>
    </component>
    <component>
        <recommendedName>
            <fullName>Myocilin, C-terminal fragment</fullName>
        </recommendedName>
        <alternativeName>
            <fullName>Myocilin 35 kDa N-terminal fragment</fullName>
        </alternativeName>
    </component>
</protein>
<comment type="function">
    <text evidence="2 4">Secreted glycoprotein regulating the activation of different signaling pathways in adjacent cells to control different processes including cell adhesion, cell-matrix adhesion, cytoskeleton organization and cell migration. Promotes substrate adhesion, spreading and formation of focal contacts. Negatively regulates cell-matrix adhesion and stress fiber assembly through Rho protein signal transduction. Modulates the organization of actin cytoskeleton by stimulating the formation of stress fibers through interactions with components of Wnt signaling pathways. Promotes cell migration through activation of PTK2 and the downstream phosphatidylinositol 3-kinase signaling. Plays a role in bone formation and promotes osteoblast differentiation in a dose-dependent manner through mitogen-activated protein kinase signaling. Mediates myelination in the peripheral nervous system through ERBB2/ERBB3 signaling. Plays a role as a regulator of muscle hypertrophy through the components of dystrophin-associated protein complex. Involved in positive regulation of mitochondrial depolarization. Plays a role in neurite outgrowth. May participate in the obstruction of fluid outflow in the trabecular meshwork.</text>
</comment>
<comment type="subunit">
    <text evidence="2 4">Homodimer (via N-terminus). Can also form higher oligomers. Interacts with OLFM3, FN1, NRCAM, GLDN and NFASC. Interacts (via N-terminus) with MYL2. Interacts with SFRP1, FRZB, FZD7, FZD10, FZD1 and WIF1; regulates Wnt signaling (By similarity). Interacts with SNTA1; regulates muscle hypertrophy. Interacts with ERBB2 and ERBB3; activates ERBB2-ERBB3 signaling pathway. Interacts with SNCG; affects its secretion and its aggregation (By similarity).</text>
</comment>
<comment type="subcellular location">
    <subcellularLocation>
        <location evidence="4">Secreted</location>
    </subcellularLocation>
    <subcellularLocation>
        <location evidence="4">Golgi apparatus</location>
    </subcellularLocation>
    <subcellularLocation>
        <location evidence="4">Cytoplasmic vesicle</location>
    </subcellularLocation>
    <subcellularLocation>
        <location evidence="4">Secreted</location>
        <location evidence="4">Extracellular space</location>
    </subcellularLocation>
    <subcellularLocation>
        <location evidence="4">Secreted</location>
        <location evidence="4">Extracellular space</location>
        <location evidence="4">Extracellular matrix</location>
    </subcellularLocation>
    <subcellularLocation>
        <location evidence="4">Secreted</location>
        <location evidence="4">Extracellular exosome</location>
    </subcellularLocation>
    <subcellularLocation>
        <location evidence="4">Mitochondrion</location>
    </subcellularLocation>
    <subcellularLocation>
        <location evidence="4">Mitochondrion intermembrane space</location>
    </subcellularLocation>
    <subcellularLocation>
        <location evidence="4">Mitochondrion inner membrane</location>
    </subcellularLocation>
    <subcellularLocation>
        <location evidence="4">Mitochondrion outer membrane</location>
    </subcellularLocation>
    <subcellularLocation>
        <location evidence="4">Rough endoplasmic reticulum</location>
    </subcellularLocation>
    <subcellularLocation>
        <location evidence="4">Cell projection</location>
    </subcellularLocation>
    <subcellularLocation>
        <location evidence="4">Cell projection</location>
        <location evidence="4">Cilium</location>
    </subcellularLocation>
    <text evidence="4">Located preferentially in the ciliary rootlet and basal body of the connecting cilium of photoreceptor cells, and in the rough endoplasmic reticulum. It is only imported to mitochondria in the trabecular meshwork. Localizes to the Golgi apparatus in Schlemm's canal endothelial cells. Appears in the extracellular space of trabecular meshwork cells by an unconventional mechanism, likely associated with exosome-like vesicles. Localizes in trabecular meshwork extracellular matrix.</text>
</comment>
<comment type="subcellular location">
    <molecule>Myocilin, C-terminal fragment</molecule>
    <subcellularLocation>
        <location evidence="1">Secreted</location>
    </subcellularLocation>
</comment>
<comment type="subcellular location">
    <molecule>Myocilin, N-terminal fragment</molecule>
    <subcellularLocation>
        <location>Endoplasmic reticulum</location>
    </subcellularLocation>
    <text evidence="1">Remains retained in the endoplasmic reticulum.</text>
</comment>
<comment type="tissue specificity">
    <text>Expressed in optic nerve head, ciliary body and retina.</text>
</comment>
<comment type="PTM">
    <text evidence="3">Palmitoylated.</text>
</comment>
<comment type="PTM">
    <text evidence="1">Undergoes a calcium-dependent proteolytic cleavage at Arg-212 by CAPN2 in the endoplasmic reticulum. The result is the production of two fragments, one of 35 kDa containing the C-terminal olfactomedin-like domain, and another of 20 kDa containing the N-terminal leucine zipper-like domain (By similarity).</text>
</comment>
<comment type="PTM">
    <text evidence="4">Glycosylated.</text>
</comment>
<proteinExistence type="evidence at transcript level"/>
<gene>
    <name type="primary">MYOC</name>
</gene>
<keyword id="KW-0106">Calcium</keyword>
<keyword id="KW-0966">Cell projection</keyword>
<keyword id="KW-0969">Cilium</keyword>
<keyword id="KW-0175">Coiled coil</keyword>
<keyword id="KW-0968">Cytoplasmic vesicle</keyword>
<keyword id="KW-1015">Disulfide bond</keyword>
<keyword id="KW-0256">Endoplasmic reticulum</keyword>
<keyword id="KW-0272">Extracellular matrix</keyword>
<keyword id="KW-0325">Glycoprotein</keyword>
<keyword id="KW-0333">Golgi apparatus</keyword>
<keyword id="KW-0449">Lipoprotein</keyword>
<keyword id="KW-0472">Membrane</keyword>
<keyword id="KW-0479">Metal-binding</keyword>
<keyword id="KW-0496">Mitochondrion</keyword>
<keyword id="KW-0999">Mitochondrion inner membrane</keyword>
<keyword id="KW-1000">Mitochondrion outer membrane</keyword>
<keyword id="KW-0564">Palmitate</keyword>
<keyword id="KW-1185">Reference proteome</keyword>
<keyword id="KW-0964">Secreted</keyword>
<keyword id="KW-0732">Signal</keyword>
<name>MYOC_FELCA</name>
<evidence type="ECO:0000250" key="1"/>
<evidence type="ECO:0000250" key="2">
    <source>
        <dbReference type="UniProtKB" id="O70624"/>
    </source>
</evidence>
<evidence type="ECO:0000250" key="3">
    <source>
        <dbReference type="UniProtKB" id="Q2PT31"/>
    </source>
</evidence>
<evidence type="ECO:0000250" key="4">
    <source>
        <dbReference type="UniProtKB" id="Q99972"/>
    </source>
</evidence>
<evidence type="ECO:0000255" key="5"/>
<evidence type="ECO:0000255" key="6">
    <source>
        <dbReference type="PROSITE-ProRule" id="PRU00446"/>
    </source>
</evidence>
<evidence type="ECO:0000256" key="7">
    <source>
        <dbReference type="SAM" id="MobiDB-lite"/>
    </source>
</evidence>
<organism>
    <name type="scientific">Felis catus</name>
    <name type="common">Cat</name>
    <name type="synonym">Felis silvestris catus</name>
    <dbReference type="NCBI Taxonomy" id="9685"/>
    <lineage>
        <taxon>Eukaryota</taxon>
        <taxon>Metazoa</taxon>
        <taxon>Chordata</taxon>
        <taxon>Craniata</taxon>
        <taxon>Vertebrata</taxon>
        <taxon>Euteleostomi</taxon>
        <taxon>Mammalia</taxon>
        <taxon>Eutheria</taxon>
        <taxon>Laurasiatheria</taxon>
        <taxon>Carnivora</taxon>
        <taxon>Feliformia</taxon>
        <taxon>Felidae</taxon>
        <taxon>Felinae</taxon>
        <taxon>Felis</taxon>
    </lineage>
</organism>